<evidence type="ECO:0000255" key="1">
    <source>
        <dbReference type="HAMAP-Rule" id="MF_00176"/>
    </source>
</evidence>
<proteinExistence type="inferred from homology"/>
<sequence length="435" mass="48570">MLDSKLLRTELDETAAKLARRGFKLDVETIRTLEEQRKSIQVEVENLQSTRNSISKQIGQLMASGDKAGAEAVKQQIGTLGDDLDAKKVELDAVMAQLDAITQTVPNIPDDAVPNGKDDSENVEVSRWGTPKTYDFEVKDHVDLGEMGDGLDFASATKITGARFVVMKGQFARLHRAIAQFMLDLHTDQHGYTELYVPYLVNAETLFGTGQLPKFGQDLFHTEPLTEKASDEEPRRLSLIPTAEVPVTNLVRDTILDEAELPLKMTAHTPCFRSEAGSYGRDTRGLIRMHQFDKVELVQITRPEDSMAALEELTGHAEKVLQLLELPYRKVILCTGDMGFGSCKTYDLEVWVPAQKTYREISSCSNMWDFQARRMQARFRRKGEKKPELVHTLNGSGLAVGRTMVAILENYQEADGRIAIPAVLQKYMGGLTHIG</sequence>
<dbReference type="EC" id="6.1.1.11" evidence="1"/>
<dbReference type="EMBL" id="CP001233">
    <property type="protein sequence ID" value="ACP05383.1"/>
    <property type="molecule type" value="Genomic_DNA"/>
</dbReference>
<dbReference type="RefSeq" id="WP_000887349.1">
    <property type="nucleotide sequence ID" value="NC_012578.1"/>
</dbReference>
<dbReference type="SMR" id="C3LU07"/>
<dbReference type="GeneID" id="88785456"/>
<dbReference type="KEGG" id="vcm:VCM66_1066"/>
<dbReference type="HOGENOM" id="CLU_023797_1_1_6"/>
<dbReference type="UniPathway" id="UPA00906">
    <property type="reaction ID" value="UER00895"/>
</dbReference>
<dbReference type="Proteomes" id="UP000001217">
    <property type="component" value="Chromosome I"/>
</dbReference>
<dbReference type="GO" id="GO:0005737">
    <property type="term" value="C:cytoplasm"/>
    <property type="evidence" value="ECO:0007669"/>
    <property type="project" value="UniProtKB-SubCell"/>
</dbReference>
<dbReference type="GO" id="GO:0005524">
    <property type="term" value="F:ATP binding"/>
    <property type="evidence" value="ECO:0007669"/>
    <property type="project" value="UniProtKB-UniRule"/>
</dbReference>
<dbReference type="GO" id="GO:0004828">
    <property type="term" value="F:serine-tRNA ligase activity"/>
    <property type="evidence" value="ECO:0007669"/>
    <property type="project" value="UniProtKB-UniRule"/>
</dbReference>
<dbReference type="GO" id="GO:0016260">
    <property type="term" value="P:selenocysteine biosynthetic process"/>
    <property type="evidence" value="ECO:0007669"/>
    <property type="project" value="UniProtKB-UniRule"/>
</dbReference>
<dbReference type="GO" id="GO:0006434">
    <property type="term" value="P:seryl-tRNA aminoacylation"/>
    <property type="evidence" value="ECO:0007669"/>
    <property type="project" value="UniProtKB-UniRule"/>
</dbReference>
<dbReference type="CDD" id="cd00770">
    <property type="entry name" value="SerRS_core"/>
    <property type="match status" value="1"/>
</dbReference>
<dbReference type="FunFam" id="1.10.287.40:FF:000001">
    <property type="entry name" value="Serine--tRNA ligase"/>
    <property type="match status" value="1"/>
</dbReference>
<dbReference type="FunFam" id="3.30.930.10:FF:000018">
    <property type="entry name" value="Serine--tRNA ligase"/>
    <property type="match status" value="1"/>
</dbReference>
<dbReference type="Gene3D" id="3.30.930.10">
    <property type="entry name" value="Bira Bifunctional Protein, Domain 2"/>
    <property type="match status" value="1"/>
</dbReference>
<dbReference type="Gene3D" id="1.10.287.40">
    <property type="entry name" value="Serine-tRNA synthetase, tRNA binding domain"/>
    <property type="match status" value="1"/>
</dbReference>
<dbReference type="HAMAP" id="MF_00176">
    <property type="entry name" value="Ser_tRNA_synth_type1"/>
    <property type="match status" value="1"/>
</dbReference>
<dbReference type="InterPro" id="IPR002314">
    <property type="entry name" value="aa-tRNA-synt_IIb"/>
</dbReference>
<dbReference type="InterPro" id="IPR006195">
    <property type="entry name" value="aa-tRNA-synth_II"/>
</dbReference>
<dbReference type="InterPro" id="IPR045864">
    <property type="entry name" value="aa-tRNA-synth_II/BPL/LPL"/>
</dbReference>
<dbReference type="InterPro" id="IPR002317">
    <property type="entry name" value="Ser-tRNA-ligase_type_1"/>
</dbReference>
<dbReference type="InterPro" id="IPR015866">
    <property type="entry name" value="Ser-tRNA-synth_1_N"/>
</dbReference>
<dbReference type="InterPro" id="IPR042103">
    <property type="entry name" value="SerRS_1_N_sf"/>
</dbReference>
<dbReference type="InterPro" id="IPR033729">
    <property type="entry name" value="SerRS_core"/>
</dbReference>
<dbReference type="InterPro" id="IPR010978">
    <property type="entry name" value="tRNA-bd_arm"/>
</dbReference>
<dbReference type="NCBIfam" id="TIGR00414">
    <property type="entry name" value="serS"/>
    <property type="match status" value="1"/>
</dbReference>
<dbReference type="PANTHER" id="PTHR43697:SF1">
    <property type="entry name" value="SERINE--TRNA LIGASE"/>
    <property type="match status" value="1"/>
</dbReference>
<dbReference type="PANTHER" id="PTHR43697">
    <property type="entry name" value="SERYL-TRNA SYNTHETASE"/>
    <property type="match status" value="1"/>
</dbReference>
<dbReference type="Pfam" id="PF02403">
    <property type="entry name" value="Seryl_tRNA_N"/>
    <property type="match status" value="1"/>
</dbReference>
<dbReference type="Pfam" id="PF00587">
    <property type="entry name" value="tRNA-synt_2b"/>
    <property type="match status" value="1"/>
</dbReference>
<dbReference type="PIRSF" id="PIRSF001529">
    <property type="entry name" value="Ser-tRNA-synth_IIa"/>
    <property type="match status" value="1"/>
</dbReference>
<dbReference type="PRINTS" id="PR00981">
    <property type="entry name" value="TRNASYNTHSER"/>
</dbReference>
<dbReference type="SUPFAM" id="SSF55681">
    <property type="entry name" value="Class II aaRS and biotin synthetases"/>
    <property type="match status" value="1"/>
</dbReference>
<dbReference type="SUPFAM" id="SSF46589">
    <property type="entry name" value="tRNA-binding arm"/>
    <property type="match status" value="1"/>
</dbReference>
<dbReference type="PROSITE" id="PS50862">
    <property type="entry name" value="AA_TRNA_LIGASE_II"/>
    <property type="match status" value="1"/>
</dbReference>
<accession>C3LU07</accession>
<keyword id="KW-0030">Aminoacyl-tRNA synthetase</keyword>
<keyword id="KW-0067">ATP-binding</keyword>
<keyword id="KW-0963">Cytoplasm</keyword>
<keyword id="KW-0436">Ligase</keyword>
<keyword id="KW-0547">Nucleotide-binding</keyword>
<keyword id="KW-0648">Protein biosynthesis</keyword>
<feature type="chain" id="PRO_1000199516" description="Serine--tRNA ligase">
    <location>
        <begin position="1"/>
        <end position="435"/>
    </location>
</feature>
<feature type="binding site" evidence="1">
    <location>
        <begin position="242"/>
        <end position="244"/>
    </location>
    <ligand>
        <name>L-serine</name>
        <dbReference type="ChEBI" id="CHEBI:33384"/>
    </ligand>
</feature>
<feature type="binding site" evidence="1">
    <location>
        <begin position="273"/>
        <end position="275"/>
    </location>
    <ligand>
        <name>ATP</name>
        <dbReference type="ChEBI" id="CHEBI:30616"/>
    </ligand>
</feature>
<feature type="binding site" evidence="1">
    <location>
        <position position="296"/>
    </location>
    <ligand>
        <name>L-serine</name>
        <dbReference type="ChEBI" id="CHEBI:33384"/>
    </ligand>
</feature>
<feature type="binding site" evidence="1">
    <location>
        <begin position="360"/>
        <end position="363"/>
    </location>
    <ligand>
        <name>ATP</name>
        <dbReference type="ChEBI" id="CHEBI:30616"/>
    </ligand>
</feature>
<feature type="binding site" evidence="1">
    <location>
        <position position="396"/>
    </location>
    <ligand>
        <name>L-serine</name>
        <dbReference type="ChEBI" id="CHEBI:33384"/>
    </ligand>
</feature>
<protein>
    <recommendedName>
        <fullName evidence="1">Serine--tRNA ligase</fullName>
        <ecNumber evidence="1">6.1.1.11</ecNumber>
    </recommendedName>
    <alternativeName>
        <fullName evidence="1">Seryl-tRNA synthetase</fullName>
        <shortName evidence="1">SerRS</shortName>
    </alternativeName>
    <alternativeName>
        <fullName evidence="1">Seryl-tRNA(Ser/Sec) synthetase</fullName>
    </alternativeName>
</protein>
<reference key="1">
    <citation type="journal article" date="2008" name="PLoS ONE">
        <title>A recalibrated molecular clock and independent origins for the cholera pandemic clones.</title>
        <authorList>
            <person name="Feng L."/>
            <person name="Reeves P.R."/>
            <person name="Lan R."/>
            <person name="Ren Y."/>
            <person name="Gao C."/>
            <person name="Zhou Z."/>
            <person name="Ren Y."/>
            <person name="Cheng J."/>
            <person name="Wang W."/>
            <person name="Wang J."/>
            <person name="Qian W."/>
            <person name="Li D."/>
            <person name="Wang L."/>
        </authorList>
    </citation>
    <scope>NUCLEOTIDE SEQUENCE [LARGE SCALE GENOMIC DNA]</scope>
    <source>
        <strain>M66-2</strain>
    </source>
</reference>
<organism>
    <name type="scientific">Vibrio cholerae serotype O1 (strain M66-2)</name>
    <dbReference type="NCBI Taxonomy" id="579112"/>
    <lineage>
        <taxon>Bacteria</taxon>
        <taxon>Pseudomonadati</taxon>
        <taxon>Pseudomonadota</taxon>
        <taxon>Gammaproteobacteria</taxon>
        <taxon>Vibrionales</taxon>
        <taxon>Vibrionaceae</taxon>
        <taxon>Vibrio</taxon>
    </lineage>
</organism>
<name>SYS_VIBCM</name>
<comment type="function">
    <text evidence="1">Catalyzes the attachment of serine to tRNA(Ser). Is also able to aminoacylate tRNA(Sec) with serine, to form the misacylated tRNA L-seryl-tRNA(Sec), which will be further converted into selenocysteinyl-tRNA(Sec).</text>
</comment>
<comment type="catalytic activity">
    <reaction evidence="1">
        <text>tRNA(Ser) + L-serine + ATP = L-seryl-tRNA(Ser) + AMP + diphosphate + H(+)</text>
        <dbReference type="Rhea" id="RHEA:12292"/>
        <dbReference type="Rhea" id="RHEA-COMP:9669"/>
        <dbReference type="Rhea" id="RHEA-COMP:9703"/>
        <dbReference type="ChEBI" id="CHEBI:15378"/>
        <dbReference type="ChEBI" id="CHEBI:30616"/>
        <dbReference type="ChEBI" id="CHEBI:33019"/>
        <dbReference type="ChEBI" id="CHEBI:33384"/>
        <dbReference type="ChEBI" id="CHEBI:78442"/>
        <dbReference type="ChEBI" id="CHEBI:78533"/>
        <dbReference type="ChEBI" id="CHEBI:456215"/>
        <dbReference type="EC" id="6.1.1.11"/>
    </reaction>
</comment>
<comment type="catalytic activity">
    <reaction evidence="1">
        <text>tRNA(Sec) + L-serine + ATP = L-seryl-tRNA(Sec) + AMP + diphosphate + H(+)</text>
        <dbReference type="Rhea" id="RHEA:42580"/>
        <dbReference type="Rhea" id="RHEA-COMP:9742"/>
        <dbReference type="Rhea" id="RHEA-COMP:10128"/>
        <dbReference type="ChEBI" id="CHEBI:15378"/>
        <dbReference type="ChEBI" id="CHEBI:30616"/>
        <dbReference type="ChEBI" id="CHEBI:33019"/>
        <dbReference type="ChEBI" id="CHEBI:33384"/>
        <dbReference type="ChEBI" id="CHEBI:78442"/>
        <dbReference type="ChEBI" id="CHEBI:78533"/>
        <dbReference type="ChEBI" id="CHEBI:456215"/>
        <dbReference type="EC" id="6.1.1.11"/>
    </reaction>
</comment>
<comment type="pathway">
    <text evidence="1">Aminoacyl-tRNA biosynthesis; selenocysteinyl-tRNA(Sec) biosynthesis; L-seryl-tRNA(Sec) from L-serine and tRNA(Sec): step 1/1.</text>
</comment>
<comment type="subunit">
    <text evidence="1">Homodimer. The tRNA molecule binds across the dimer.</text>
</comment>
<comment type="subcellular location">
    <subcellularLocation>
        <location evidence="1">Cytoplasm</location>
    </subcellularLocation>
</comment>
<comment type="domain">
    <text evidence="1">Consists of two distinct domains, a catalytic core and a N-terminal extension that is involved in tRNA binding.</text>
</comment>
<comment type="similarity">
    <text evidence="1">Belongs to the class-II aminoacyl-tRNA synthetase family. Type-1 seryl-tRNA synthetase subfamily.</text>
</comment>
<gene>
    <name evidence="1" type="primary">serS</name>
    <name type="ordered locus">VCM66_1066</name>
</gene>